<sequence>MSFPIERVRSEFPLLAREVNGQPLAYLDSAASAQKPQAVIDRELDFYRHGYAAVHRGIHTLSAEATQEMEAVREKVAAFINAGSAEEIIFVKGTTEGINLVANSFGRHFLQPGDSIIITEMEHHANIVPWQMLAQERGLNLRVWPLQPDGTLDLARLPGLIDASTKLLALTQVSNVLGTVNPVQEITAQAKAAGLKVLIDGAQAVMHQRVDVQALDCDFYVFSGHKLYGPSGIGILYGRQALLQQMPPWEGGGSMIQQVSLTAGTTYAEPPWRFEAGSPNTAGMMGLGAAIDYVNTLGLEAIGDYEQSLMHYALEALQQVPRLKIYGPAERAGVIAFNLGEHHAYDVGSFLDQYGIAIRTGHHCAMPLMAFYNVPSMCRASLALYNTRDEVDRLVAGLQRIQKLLG</sequence>
<gene>
    <name evidence="1" type="primary">sufS</name>
    <name type="ordered locus">Spro_2183</name>
</gene>
<protein>
    <recommendedName>
        <fullName evidence="1">Cysteine desulfurase</fullName>
        <ecNumber evidence="1">2.8.1.7</ecNumber>
    </recommendedName>
    <alternativeName>
        <fullName evidence="1">Selenocysteine beta-lyase</fullName>
        <shortName evidence="1">SCL</shortName>
    </alternativeName>
    <alternativeName>
        <fullName evidence="1">Selenocysteine lyase</fullName>
        <ecNumber evidence="1">4.4.1.16</ecNumber>
    </alternativeName>
    <alternativeName>
        <fullName evidence="1">Selenocysteine reductase</fullName>
    </alternativeName>
</protein>
<name>SUFS_SERP5</name>
<proteinExistence type="inferred from homology"/>
<dbReference type="EC" id="2.8.1.7" evidence="1"/>
<dbReference type="EC" id="4.4.1.16" evidence="1"/>
<dbReference type="EMBL" id="CP000826">
    <property type="protein sequence ID" value="ABV41284.1"/>
    <property type="molecule type" value="Genomic_DNA"/>
</dbReference>
<dbReference type="SMR" id="A8GDU4"/>
<dbReference type="STRING" id="399741.Spro_2183"/>
<dbReference type="KEGG" id="spe:Spro_2183"/>
<dbReference type="eggNOG" id="COG0520">
    <property type="taxonomic scope" value="Bacteria"/>
</dbReference>
<dbReference type="HOGENOM" id="CLU_003433_2_5_6"/>
<dbReference type="OrthoDB" id="9808002at2"/>
<dbReference type="UniPathway" id="UPA00266"/>
<dbReference type="GO" id="GO:0005737">
    <property type="term" value="C:cytoplasm"/>
    <property type="evidence" value="ECO:0007669"/>
    <property type="project" value="UniProtKB-SubCell"/>
</dbReference>
<dbReference type="GO" id="GO:0031071">
    <property type="term" value="F:cysteine desulfurase activity"/>
    <property type="evidence" value="ECO:0007669"/>
    <property type="project" value="UniProtKB-UniRule"/>
</dbReference>
<dbReference type="GO" id="GO:0030170">
    <property type="term" value="F:pyridoxal phosphate binding"/>
    <property type="evidence" value="ECO:0007669"/>
    <property type="project" value="InterPro"/>
</dbReference>
<dbReference type="GO" id="GO:0009000">
    <property type="term" value="F:selenocysteine lyase activity"/>
    <property type="evidence" value="ECO:0007669"/>
    <property type="project" value="UniProtKB-UniRule"/>
</dbReference>
<dbReference type="GO" id="GO:0006534">
    <property type="term" value="P:cysteine metabolic process"/>
    <property type="evidence" value="ECO:0007669"/>
    <property type="project" value="InterPro"/>
</dbReference>
<dbReference type="CDD" id="cd06453">
    <property type="entry name" value="SufS_like"/>
    <property type="match status" value="1"/>
</dbReference>
<dbReference type="Gene3D" id="3.90.1150.10">
    <property type="entry name" value="Aspartate Aminotransferase, domain 1"/>
    <property type="match status" value="1"/>
</dbReference>
<dbReference type="Gene3D" id="3.40.640.10">
    <property type="entry name" value="Type I PLP-dependent aspartate aminotransferase-like (Major domain)"/>
    <property type="match status" value="1"/>
</dbReference>
<dbReference type="HAMAP" id="MF_01831">
    <property type="entry name" value="SufS_aminotrans_5"/>
    <property type="match status" value="1"/>
</dbReference>
<dbReference type="InterPro" id="IPR000192">
    <property type="entry name" value="Aminotrans_V_dom"/>
</dbReference>
<dbReference type="InterPro" id="IPR020578">
    <property type="entry name" value="Aminotrans_V_PyrdxlP_BS"/>
</dbReference>
<dbReference type="InterPro" id="IPR010970">
    <property type="entry name" value="Cys_dSase_SufS"/>
</dbReference>
<dbReference type="InterPro" id="IPR015424">
    <property type="entry name" value="PyrdxlP-dep_Trfase"/>
</dbReference>
<dbReference type="InterPro" id="IPR015421">
    <property type="entry name" value="PyrdxlP-dep_Trfase_major"/>
</dbReference>
<dbReference type="InterPro" id="IPR015422">
    <property type="entry name" value="PyrdxlP-dep_Trfase_small"/>
</dbReference>
<dbReference type="NCBIfam" id="NF006791">
    <property type="entry name" value="PRK09295.1"/>
    <property type="match status" value="1"/>
</dbReference>
<dbReference type="NCBIfam" id="TIGR01979">
    <property type="entry name" value="sufS"/>
    <property type="match status" value="1"/>
</dbReference>
<dbReference type="PANTHER" id="PTHR43586">
    <property type="entry name" value="CYSTEINE DESULFURASE"/>
    <property type="match status" value="1"/>
</dbReference>
<dbReference type="PANTHER" id="PTHR43586:SF25">
    <property type="entry name" value="CYSTEINE DESULFURASE"/>
    <property type="match status" value="1"/>
</dbReference>
<dbReference type="Pfam" id="PF00266">
    <property type="entry name" value="Aminotran_5"/>
    <property type="match status" value="1"/>
</dbReference>
<dbReference type="SUPFAM" id="SSF53383">
    <property type="entry name" value="PLP-dependent transferases"/>
    <property type="match status" value="1"/>
</dbReference>
<dbReference type="PROSITE" id="PS00595">
    <property type="entry name" value="AA_TRANSFER_CLASS_5"/>
    <property type="match status" value="1"/>
</dbReference>
<keyword id="KW-0963">Cytoplasm</keyword>
<keyword id="KW-0456">Lyase</keyword>
<keyword id="KW-0663">Pyridoxal phosphate</keyword>
<keyword id="KW-0808">Transferase</keyword>
<organism>
    <name type="scientific">Serratia proteamaculans (strain 568)</name>
    <dbReference type="NCBI Taxonomy" id="399741"/>
    <lineage>
        <taxon>Bacteria</taxon>
        <taxon>Pseudomonadati</taxon>
        <taxon>Pseudomonadota</taxon>
        <taxon>Gammaproteobacteria</taxon>
        <taxon>Enterobacterales</taxon>
        <taxon>Yersiniaceae</taxon>
        <taxon>Serratia</taxon>
    </lineage>
</organism>
<evidence type="ECO:0000255" key="1">
    <source>
        <dbReference type="HAMAP-Rule" id="MF_01831"/>
    </source>
</evidence>
<feature type="chain" id="PRO_1000070429" description="Cysteine desulfurase">
    <location>
        <begin position="1"/>
        <end position="406"/>
    </location>
</feature>
<feature type="active site" description="Cysteine persulfide intermediate" evidence="1">
    <location>
        <position position="364"/>
    </location>
</feature>
<feature type="modified residue" description="N6-(pyridoxal phosphate)lysine" evidence="1">
    <location>
        <position position="226"/>
    </location>
</feature>
<accession>A8GDU4</accession>
<comment type="function">
    <text evidence="1">Cysteine desulfurases mobilize the sulfur from L-cysteine to yield L-alanine, an essential step in sulfur metabolism for biosynthesis of a variety of sulfur-containing biomolecules. Component of the suf operon, which is activated and required under specific conditions such as oxidative stress and iron limitation. Acts as a potent selenocysteine lyase in vitro, that mobilizes selenium from L-selenocysteine. Selenocysteine lyase activity is however unsure in vivo.</text>
</comment>
<comment type="catalytic activity">
    <reaction evidence="1">
        <text>(sulfur carrier)-H + L-cysteine = (sulfur carrier)-SH + L-alanine</text>
        <dbReference type="Rhea" id="RHEA:43892"/>
        <dbReference type="Rhea" id="RHEA-COMP:14737"/>
        <dbReference type="Rhea" id="RHEA-COMP:14739"/>
        <dbReference type="ChEBI" id="CHEBI:29917"/>
        <dbReference type="ChEBI" id="CHEBI:35235"/>
        <dbReference type="ChEBI" id="CHEBI:57972"/>
        <dbReference type="ChEBI" id="CHEBI:64428"/>
        <dbReference type="EC" id="2.8.1.7"/>
    </reaction>
</comment>
<comment type="catalytic activity">
    <reaction evidence="1">
        <text>L-selenocysteine + AH2 = hydrogenselenide + L-alanine + A + H(+)</text>
        <dbReference type="Rhea" id="RHEA:11632"/>
        <dbReference type="ChEBI" id="CHEBI:13193"/>
        <dbReference type="ChEBI" id="CHEBI:15378"/>
        <dbReference type="ChEBI" id="CHEBI:17499"/>
        <dbReference type="ChEBI" id="CHEBI:29317"/>
        <dbReference type="ChEBI" id="CHEBI:57843"/>
        <dbReference type="ChEBI" id="CHEBI:57972"/>
        <dbReference type="EC" id="4.4.1.16"/>
    </reaction>
</comment>
<comment type="cofactor">
    <cofactor evidence="1">
        <name>pyridoxal 5'-phosphate</name>
        <dbReference type="ChEBI" id="CHEBI:597326"/>
    </cofactor>
</comment>
<comment type="pathway">
    <text evidence="1">Cofactor biosynthesis; iron-sulfur cluster biosynthesis.</text>
</comment>
<comment type="subunit">
    <text evidence="1">Homodimer. Interacts with SufE and the SufBCD complex composed of SufB, SufC and SufD. The interaction with SufE is required to mediate the direct transfer of the sulfur atom from the S-sulfanylcysteine.</text>
</comment>
<comment type="subcellular location">
    <subcellularLocation>
        <location evidence="1">Cytoplasm</location>
    </subcellularLocation>
</comment>
<comment type="similarity">
    <text evidence="1">Belongs to the class-V pyridoxal-phosphate-dependent aminotransferase family. Csd subfamily.</text>
</comment>
<reference key="1">
    <citation type="submission" date="2007-09" db="EMBL/GenBank/DDBJ databases">
        <title>Complete sequence of chromosome of Serratia proteamaculans 568.</title>
        <authorList>
            <consortium name="US DOE Joint Genome Institute"/>
            <person name="Copeland A."/>
            <person name="Lucas S."/>
            <person name="Lapidus A."/>
            <person name="Barry K."/>
            <person name="Glavina del Rio T."/>
            <person name="Dalin E."/>
            <person name="Tice H."/>
            <person name="Pitluck S."/>
            <person name="Chain P."/>
            <person name="Malfatti S."/>
            <person name="Shin M."/>
            <person name="Vergez L."/>
            <person name="Schmutz J."/>
            <person name="Larimer F."/>
            <person name="Land M."/>
            <person name="Hauser L."/>
            <person name="Kyrpides N."/>
            <person name="Kim E."/>
            <person name="Taghavi S."/>
            <person name="Newman L."/>
            <person name="Vangronsveld J."/>
            <person name="van der Lelie D."/>
            <person name="Richardson P."/>
        </authorList>
    </citation>
    <scope>NUCLEOTIDE SEQUENCE [LARGE SCALE GENOMIC DNA]</scope>
    <source>
        <strain>568</strain>
    </source>
</reference>